<organism>
    <name type="scientific">Chilobrachys guangxiensis</name>
    <name type="common">Chinese earth tiger tarantula</name>
    <name type="synonym">Chilobrachys jingzhao</name>
    <dbReference type="NCBI Taxonomy" id="278060"/>
    <lineage>
        <taxon>Eukaryota</taxon>
        <taxon>Metazoa</taxon>
        <taxon>Ecdysozoa</taxon>
        <taxon>Arthropoda</taxon>
        <taxon>Chelicerata</taxon>
        <taxon>Arachnida</taxon>
        <taxon>Araneae</taxon>
        <taxon>Mygalomorphae</taxon>
        <taxon>Theraphosidae</taxon>
        <taxon>Chilobrachys</taxon>
    </lineage>
</organism>
<dbReference type="SMR" id="P0CH50"/>
<dbReference type="GO" id="GO:0005576">
    <property type="term" value="C:extracellular region"/>
    <property type="evidence" value="ECO:0007669"/>
    <property type="project" value="UniProtKB-SubCell"/>
</dbReference>
<dbReference type="GO" id="GO:0008200">
    <property type="term" value="F:ion channel inhibitor activity"/>
    <property type="evidence" value="ECO:0007669"/>
    <property type="project" value="InterPro"/>
</dbReference>
<dbReference type="GO" id="GO:0090729">
    <property type="term" value="F:toxin activity"/>
    <property type="evidence" value="ECO:0007669"/>
    <property type="project" value="UniProtKB-KW"/>
</dbReference>
<dbReference type="InterPro" id="IPR011696">
    <property type="entry name" value="Huwentoxin-1"/>
</dbReference>
<dbReference type="Pfam" id="PF07740">
    <property type="entry name" value="Toxin_12"/>
    <property type="match status" value="1"/>
</dbReference>
<sequence>GCQKFFWTCHPGQPPCCSGLACTWPTEICIDG</sequence>
<evidence type="ECO:0000250" key="1"/>
<evidence type="ECO:0000269" key="2">
    <source>
    </source>
</evidence>
<evidence type="ECO:0000303" key="3">
    <source>
    </source>
</evidence>
<evidence type="ECO:0000305" key="4"/>
<protein>
    <recommendedName>
        <fullName evidence="3">Jingzhaotoxin F4-32.60</fullName>
    </recommendedName>
    <alternativeName>
        <fullName evidence="3">Peptide F4-32.60</fullName>
    </alternativeName>
</protein>
<reference key="1">
    <citation type="journal article" date="2007" name="Proteomics">
        <title>Proteomic and peptidomic analysis of the venom from Chinese tarantula Chilobrachys jingzhao.</title>
        <authorList>
            <person name="Liao Z."/>
            <person name="Cao J."/>
            <person name="Li S."/>
            <person name="Yan X."/>
            <person name="Hu W."/>
            <person name="He Q."/>
            <person name="Chen J."/>
            <person name="Tang J."/>
            <person name="Xie J."/>
            <person name="Liang S."/>
        </authorList>
    </citation>
    <scope>PROTEIN SEQUENCE</scope>
    <scope>IDENTIFICATION BY MASS SPECTROMETRY</scope>
    <scope>AMIDATION AT ASP-31</scope>
    <source>
        <tissue>Venom</tissue>
    </source>
</reference>
<proteinExistence type="evidence at protein level"/>
<name>JZ432_CHIGU</name>
<keyword id="KW-0027">Amidation</keyword>
<keyword id="KW-0903">Direct protein sequencing</keyword>
<keyword id="KW-1015">Disulfide bond</keyword>
<keyword id="KW-0872">Ion channel impairing toxin</keyword>
<keyword id="KW-0960">Knottin</keyword>
<keyword id="KW-0964">Secreted</keyword>
<keyword id="KW-0800">Toxin</keyword>
<comment type="function">
    <text>Probable ion channel inhibitor.</text>
</comment>
<comment type="subcellular location">
    <subcellularLocation>
        <location>Secreted</location>
    </subcellularLocation>
</comment>
<comment type="tissue specificity">
    <text>Expressed by the venom gland.</text>
</comment>
<comment type="domain">
    <text evidence="1">The presence of a 'disulfide through disulfide knot' structurally defines this protein as a knottin.</text>
</comment>
<comment type="PTM">
    <text evidence="2">Amidated as well as non-amidated forms are found in the venom.</text>
</comment>
<comment type="similarity">
    <text evidence="4">Belongs to the neurotoxin 10 (Hwtx-1) family. 30 (Jztx-14) subfamily.</text>
</comment>
<feature type="peptide" id="PRO_0000398559" description="Jingzhaotoxin F4-32.60">
    <location>
        <begin position="1"/>
        <end position="31"/>
    </location>
</feature>
<feature type="modified residue" description="Aspartic acid 1-amide" evidence="2">
    <location>
        <position position="31"/>
    </location>
</feature>
<feature type="disulfide bond" evidence="1">
    <location>
        <begin position="2"/>
        <end position="17"/>
    </location>
</feature>
<feature type="disulfide bond" evidence="1">
    <location>
        <begin position="9"/>
        <end position="22"/>
    </location>
</feature>
<feature type="disulfide bond" evidence="1">
    <location>
        <begin position="16"/>
        <end position="29"/>
    </location>
</feature>
<accession>P0CH50</accession>